<sequence length="117" mass="12582">MEFGLSWLFLVAILKGVQCEVQLVESGGGLVQPGGSLRLSCAASGFTFSSYAMSWVRQAPGKGLEWVSAISGSGGSTYYADSVKGRFTISRDNSKNTLYLQMNSLRAEDTAVYYCAK</sequence>
<evidence type="ECO:0000250" key="1">
    <source>
        <dbReference type="UniProtKB" id="P23083"/>
    </source>
</evidence>
<evidence type="ECO:0000255" key="2">
    <source>
        <dbReference type="PROSITE-ProRule" id="PRU00114"/>
    </source>
</evidence>
<evidence type="ECO:0000269" key="3">
    <source>
    </source>
</evidence>
<evidence type="ECO:0000269" key="4">
    <source>
    </source>
</evidence>
<evidence type="ECO:0000269" key="5">
    <source>
    </source>
</evidence>
<evidence type="ECO:0000269" key="6">
    <source>
    </source>
</evidence>
<evidence type="ECO:0000269" key="7">
    <source>
    </source>
</evidence>
<evidence type="ECO:0000269" key="8">
    <source>
    </source>
</evidence>
<evidence type="ECO:0000303" key="9">
    <source>
    </source>
</evidence>
<evidence type="ECO:0000303" key="10">
    <source>
    </source>
</evidence>
<evidence type="ECO:0000303" key="11">
    <source>
    </source>
</evidence>
<evidence type="ECO:0000303" key="12">
    <source>
    </source>
</evidence>
<evidence type="ECO:0000303" key="13">
    <source>
    </source>
</evidence>
<evidence type="ECO:0000303" key="14">
    <source ref="8"/>
</evidence>
<evidence type="ECO:0000305" key="15"/>
<evidence type="ECO:0000305" key="16">
    <source>
    </source>
</evidence>
<evidence type="ECO:0000305" key="17">
    <source>
    </source>
</evidence>
<evidence type="ECO:0000305" key="18">
    <source>
    </source>
</evidence>
<evidence type="ECO:0000305" key="19">
    <source>
    </source>
</evidence>
<evidence type="ECO:0007744" key="20">
    <source>
        <dbReference type="PDB" id="1OHQ"/>
    </source>
</evidence>
<evidence type="ECO:0007744" key="21">
    <source>
        <dbReference type="PDB" id="3BN9"/>
    </source>
</evidence>
<evidence type="ECO:0007744" key="22">
    <source>
        <dbReference type="PDB" id="3UPC"/>
    </source>
</evidence>
<evidence type="ECO:0007744" key="23">
    <source>
        <dbReference type="PDB" id="3ZHD"/>
    </source>
</evidence>
<evidence type="ECO:0007744" key="24">
    <source>
        <dbReference type="PDB" id="3ZHK"/>
    </source>
</evidence>
<evidence type="ECO:0007744" key="25">
    <source>
        <dbReference type="PDB" id="3ZHL"/>
    </source>
</evidence>
<evidence type="ECO:0007829" key="26">
    <source>
        <dbReference type="PDB" id="1OHQ"/>
    </source>
</evidence>
<evidence type="ECO:0007829" key="27">
    <source>
        <dbReference type="PDB" id="3ZHD"/>
    </source>
</evidence>
<organism>
    <name type="scientific">Homo sapiens</name>
    <name type="common">Human</name>
    <dbReference type="NCBI Taxonomy" id="9606"/>
    <lineage>
        <taxon>Eukaryota</taxon>
        <taxon>Metazoa</taxon>
        <taxon>Chordata</taxon>
        <taxon>Craniata</taxon>
        <taxon>Vertebrata</taxon>
        <taxon>Euteleostomi</taxon>
        <taxon>Mammalia</taxon>
        <taxon>Eutheria</taxon>
        <taxon>Euarchontoglires</taxon>
        <taxon>Primates</taxon>
        <taxon>Haplorrhini</taxon>
        <taxon>Catarrhini</taxon>
        <taxon>Hominidae</taxon>
        <taxon>Homo</taxon>
    </lineage>
</organism>
<dbReference type="EMBL" id="M35415">
    <property type="protein sequence ID" value="AAA58735.1"/>
    <property type="molecule type" value="Genomic_DNA"/>
</dbReference>
<dbReference type="EMBL" id="AC245166">
    <property type="status" value="NOT_ANNOTATED_CDS"/>
    <property type="molecule type" value="Genomic_DNA"/>
</dbReference>
<dbReference type="PIR" id="A02047">
    <property type="entry name" value="H3HU26"/>
</dbReference>
<dbReference type="PIR" id="A02048">
    <property type="entry name" value="H3HUTL"/>
</dbReference>
<dbReference type="PIR" id="A02057">
    <property type="entry name" value="M3HUPM"/>
</dbReference>
<dbReference type="PIR" id="A02058">
    <property type="entry name" value="M3HULY"/>
</dbReference>
<dbReference type="PIR" id="A02059">
    <property type="entry name" value="G1HUWS"/>
</dbReference>
<dbReference type="PIR" id="A02060">
    <property type="entry name" value="G1HUTE"/>
</dbReference>
<dbReference type="PIR" id="A02061">
    <property type="entry name" value="A1HUZP"/>
</dbReference>
<dbReference type="PIR" id="A02062">
    <property type="entry name" value="A1HUTU"/>
</dbReference>
<dbReference type="PDB" id="1OHQ">
    <property type="method" value="X-ray"/>
    <property type="resolution" value="2.00 A"/>
    <property type="chains" value="A/B=20-116"/>
</dbReference>
<dbReference type="PDB" id="3BN9">
    <property type="method" value="X-ray"/>
    <property type="resolution" value="2.17 A"/>
    <property type="chains" value="D/F=21-116"/>
</dbReference>
<dbReference type="PDB" id="3UPC">
    <property type="method" value="X-ray"/>
    <property type="resolution" value="2.80 A"/>
    <property type="chains" value="A/B/C/D/E/F/G/H/I/J=22-117"/>
</dbReference>
<dbReference type="PDB" id="3ZHD">
    <property type="method" value="X-ray"/>
    <property type="resolution" value="1.96 A"/>
    <property type="chains" value="A/B=20-116"/>
</dbReference>
<dbReference type="PDB" id="3ZHK">
    <property type="method" value="X-ray"/>
    <property type="resolution" value="1.96 A"/>
    <property type="chains" value="A/B=20-116"/>
</dbReference>
<dbReference type="PDB" id="3ZHL">
    <property type="method" value="X-ray"/>
    <property type="resolution" value="2.47 A"/>
    <property type="chains" value="A=20-116"/>
</dbReference>
<dbReference type="PDB" id="4KFZ">
    <property type="method" value="X-ray"/>
    <property type="resolution" value="2.80 A"/>
    <property type="chains" value="C/D=20-116"/>
</dbReference>
<dbReference type="PDBsum" id="1OHQ"/>
<dbReference type="PDBsum" id="3BN9"/>
<dbReference type="PDBsum" id="3UPC"/>
<dbReference type="PDBsum" id="3ZHD"/>
<dbReference type="PDBsum" id="3ZHK"/>
<dbReference type="PDBsum" id="3ZHL"/>
<dbReference type="PDBsum" id="4KFZ"/>
<dbReference type="EMDB" id="EMD-33133"/>
<dbReference type="EMDB" id="EMD-33307"/>
<dbReference type="EMDB" id="EMD-33434"/>
<dbReference type="EMDB" id="EMD-34410"/>
<dbReference type="EMDB" id="EMD-34411"/>
<dbReference type="EMDB" id="EMD-36372"/>
<dbReference type="EMDB" id="EMD-38283"/>
<dbReference type="EMDB" id="EMD-38284"/>
<dbReference type="EMDB" id="EMD-42970"/>
<dbReference type="SMR" id="P01764"/>
<dbReference type="FunCoup" id="P01764">
    <property type="interactions" value="465"/>
</dbReference>
<dbReference type="IntAct" id="P01764">
    <property type="interactions" value="2"/>
</dbReference>
<dbReference type="DrugBank" id="DB04147">
    <property type="generic name" value="Dodecyldimethylamine N-oxide"/>
</dbReference>
<dbReference type="IMGT_GENE-DB" id="IGHV3-23"/>
<dbReference type="BioMuta" id="IGHV3-23"/>
<dbReference type="DMDM" id="123854"/>
<dbReference type="jPOST" id="P01764"/>
<dbReference type="MassIVE" id="P01764"/>
<dbReference type="PRIDE" id="P01764"/>
<dbReference type="Ensembl" id="ENST00000390609.3">
    <property type="protein sequence ID" value="ENSP00000375018.2"/>
    <property type="gene ID" value="ENSG00000211949.3"/>
</dbReference>
<dbReference type="Ensembl" id="ENST00000632630.1">
    <property type="protein sequence ID" value="ENSP00000487761.1"/>
    <property type="gene ID" value="ENSG00000281962.1"/>
</dbReference>
<dbReference type="UCSC" id="uc059gga.1">
    <property type="organism name" value="human"/>
</dbReference>
<dbReference type="AGR" id="HGNC:5588"/>
<dbReference type="GeneCards" id="IGHV3-23"/>
<dbReference type="HGNC" id="HGNC:5588">
    <property type="gene designation" value="IGHV3-23"/>
</dbReference>
<dbReference type="HPA" id="ENSG00000211949">
    <property type="expression patterns" value="Tissue enhanced (intestine, lymphoid tissue)"/>
</dbReference>
<dbReference type="neXtProt" id="NX_P01764"/>
<dbReference type="OpenTargets" id="ENSG00000211949"/>
<dbReference type="VEuPathDB" id="HostDB:ENSG00000211949"/>
<dbReference type="GeneTree" id="ENSGT01050000244871"/>
<dbReference type="InParanoid" id="P01764"/>
<dbReference type="OMA" id="WITWIRN"/>
<dbReference type="OrthoDB" id="9945861at2759"/>
<dbReference type="PAN-GO" id="P01764">
    <property type="GO annotations" value="11 GO annotations based on evolutionary models"/>
</dbReference>
<dbReference type="PhylomeDB" id="P01764"/>
<dbReference type="PathwayCommons" id="P01764"/>
<dbReference type="Reactome" id="R-HSA-166663">
    <property type="pathway name" value="Initial triggering of complement"/>
</dbReference>
<dbReference type="Reactome" id="R-HSA-173623">
    <property type="pathway name" value="Classical antibody-mediated complement activation"/>
</dbReference>
<dbReference type="Reactome" id="R-HSA-198933">
    <property type="pathway name" value="Immunoregulatory interactions between a Lymphoid and a non-Lymphoid cell"/>
</dbReference>
<dbReference type="Reactome" id="R-HSA-202733">
    <property type="pathway name" value="Cell surface interactions at the vascular wall"/>
</dbReference>
<dbReference type="Reactome" id="R-HSA-2029481">
    <property type="pathway name" value="FCGR activation"/>
</dbReference>
<dbReference type="Reactome" id="R-HSA-2029482">
    <property type="pathway name" value="Regulation of actin dynamics for phagocytic cup formation"/>
</dbReference>
<dbReference type="Reactome" id="R-HSA-2029485">
    <property type="pathway name" value="Role of phospholipids in phagocytosis"/>
</dbReference>
<dbReference type="Reactome" id="R-HSA-2168880">
    <property type="pathway name" value="Scavenging of heme from plasma"/>
</dbReference>
<dbReference type="Reactome" id="R-HSA-2454202">
    <property type="pathway name" value="Fc epsilon receptor (FCERI) signaling"/>
</dbReference>
<dbReference type="Reactome" id="R-HSA-2730905">
    <property type="pathway name" value="Role of LAT2/NTAL/LAB on calcium mobilization"/>
</dbReference>
<dbReference type="Reactome" id="R-HSA-2871796">
    <property type="pathway name" value="FCERI mediated MAPK activation"/>
</dbReference>
<dbReference type="Reactome" id="R-HSA-2871809">
    <property type="pathway name" value="FCERI mediated Ca+2 mobilization"/>
</dbReference>
<dbReference type="Reactome" id="R-HSA-2871837">
    <property type="pathway name" value="FCERI mediated NF-kB activation"/>
</dbReference>
<dbReference type="Reactome" id="R-HSA-5690714">
    <property type="pathway name" value="CD22 mediated BCR regulation"/>
</dbReference>
<dbReference type="Reactome" id="R-HSA-9664323">
    <property type="pathway name" value="FCGR3A-mediated IL10 synthesis"/>
</dbReference>
<dbReference type="Reactome" id="R-HSA-9664422">
    <property type="pathway name" value="FCGR3A-mediated phagocytosis"/>
</dbReference>
<dbReference type="Reactome" id="R-HSA-9679191">
    <property type="pathway name" value="Potential therapeutics for SARS"/>
</dbReference>
<dbReference type="Reactome" id="R-HSA-977606">
    <property type="pathway name" value="Regulation of Complement cascade"/>
</dbReference>
<dbReference type="Reactome" id="R-HSA-983695">
    <property type="pathway name" value="Antigen activates B Cell Receptor (BCR) leading to generation of second messengers"/>
</dbReference>
<dbReference type="SignaLink" id="P01764"/>
<dbReference type="ChiTaRS" id="IGHV3-23">
    <property type="organism name" value="human"/>
</dbReference>
<dbReference type="EvolutionaryTrace" id="P01764"/>
<dbReference type="Pharos" id="P01764">
    <property type="development level" value="Tdark"/>
</dbReference>
<dbReference type="PRO" id="PR:P01764"/>
<dbReference type="Proteomes" id="UP000005640">
    <property type="component" value="Chromosome 14"/>
</dbReference>
<dbReference type="RNAct" id="P01764">
    <property type="molecule type" value="protein"/>
</dbReference>
<dbReference type="Bgee" id="ENSG00000211949">
    <property type="expression patterns" value="Expressed in duodenum and 95 other cell types or tissues"/>
</dbReference>
<dbReference type="GO" id="GO:0072562">
    <property type="term" value="C:blood microparticle"/>
    <property type="evidence" value="ECO:0007005"/>
    <property type="project" value="UniProtKB"/>
</dbReference>
<dbReference type="GO" id="GO:0070062">
    <property type="term" value="C:extracellular exosome"/>
    <property type="evidence" value="ECO:0007005"/>
    <property type="project" value="UniProtKB"/>
</dbReference>
<dbReference type="GO" id="GO:0005576">
    <property type="term" value="C:extracellular region"/>
    <property type="evidence" value="ECO:0000304"/>
    <property type="project" value="Reactome"/>
</dbReference>
<dbReference type="GO" id="GO:0005615">
    <property type="term" value="C:extracellular space"/>
    <property type="evidence" value="ECO:0007005"/>
    <property type="project" value="UniProtKB"/>
</dbReference>
<dbReference type="GO" id="GO:0019814">
    <property type="term" value="C:immunoglobulin complex"/>
    <property type="evidence" value="ECO:0007669"/>
    <property type="project" value="UniProtKB-KW"/>
</dbReference>
<dbReference type="GO" id="GO:0005886">
    <property type="term" value="C:plasma membrane"/>
    <property type="evidence" value="ECO:0000304"/>
    <property type="project" value="Reactome"/>
</dbReference>
<dbReference type="GO" id="GO:0003823">
    <property type="term" value="F:antigen binding"/>
    <property type="evidence" value="ECO:0000318"/>
    <property type="project" value="GO_Central"/>
</dbReference>
<dbReference type="GO" id="GO:0006955">
    <property type="term" value="P:immune response"/>
    <property type="evidence" value="ECO:0000303"/>
    <property type="project" value="UniProtKB"/>
</dbReference>
<dbReference type="GO" id="GO:0016064">
    <property type="term" value="P:immunoglobulin mediated immune response"/>
    <property type="evidence" value="ECO:0000318"/>
    <property type="project" value="GO_Central"/>
</dbReference>
<dbReference type="CDD" id="cd04981">
    <property type="entry name" value="IgV_H"/>
    <property type="match status" value="1"/>
</dbReference>
<dbReference type="FunFam" id="2.60.40.10:FF:000942">
    <property type="entry name" value="Immunoglobulin heavy variable 3-23"/>
    <property type="match status" value="1"/>
</dbReference>
<dbReference type="Gene3D" id="2.60.40.10">
    <property type="entry name" value="Immunoglobulins"/>
    <property type="match status" value="1"/>
</dbReference>
<dbReference type="InterPro" id="IPR007110">
    <property type="entry name" value="Ig-like_dom"/>
</dbReference>
<dbReference type="InterPro" id="IPR036179">
    <property type="entry name" value="Ig-like_dom_sf"/>
</dbReference>
<dbReference type="InterPro" id="IPR013783">
    <property type="entry name" value="Ig-like_fold"/>
</dbReference>
<dbReference type="InterPro" id="IPR013106">
    <property type="entry name" value="Ig_V-set"/>
</dbReference>
<dbReference type="InterPro" id="IPR050199">
    <property type="entry name" value="IgHV"/>
</dbReference>
<dbReference type="PANTHER" id="PTHR23266">
    <property type="entry name" value="IMMUNOGLOBULIN HEAVY CHAIN"/>
    <property type="match status" value="1"/>
</dbReference>
<dbReference type="Pfam" id="PF07686">
    <property type="entry name" value="V-set"/>
    <property type="match status" value="1"/>
</dbReference>
<dbReference type="SMART" id="SM00406">
    <property type="entry name" value="IGv"/>
    <property type="match status" value="1"/>
</dbReference>
<dbReference type="SUPFAM" id="SSF48726">
    <property type="entry name" value="Immunoglobulin"/>
    <property type="match status" value="1"/>
</dbReference>
<dbReference type="PROSITE" id="PS50835">
    <property type="entry name" value="IG_LIKE"/>
    <property type="match status" value="1"/>
</dbReference>
<protein>
    <recommendedName>
        <fullName evidence="9 14">Immunoglobulin heavy variable 3-23</fullName>
    </recommendedName>
    <alternativeName>
        <fullName evidence="17">Ig heavy chain V-III region LAY</fullName>
    </alternativeName>
    <alternativeName>
        <fullName evidence="17">Ig heavy chain V-III region POM</fullName>
    </alternativeName>
    <alternativeName>
        <fullName evidence="18">Ig heavy chain V-III region TEI</fullName>
    </alternativeName>
    <alternativeName>
        <fullName evidence="16">Ig heavy chain V-III region TIL</fullName>
    </alternativeName>
    <alternativeName>
        <fullName evidence="18">Ig heavy chain V-III region TUR</fullName>
    </alternativeName>
    <alternativeName>
        <fullName evidence="19">Ig heavy chain V-III region VH26</fullName>
    </alternativeName>
    <alternativeName>
        <fullName evidence="18">Ig heavy chain V-III region WAS</fullName>
    </alternativeName>
    <alternativeName>
        <fullName evidence="18">Ig heavy chain V-III region ZAP</fullName>
    </alternativeName>
</protein>
<feature type="signal peptide" evidence="5 6 7">
    <location>
        <begin position="1"/>
        <end position="19"/>
    </location>
</feature>
<feature type="chain" id="PRO_0000015249" description="Immunoglobulin heavy variable 3-23" evidence="5 6 7">
    <location>
        <begin position="20"/>
        <end position="117"/>
    </location>
</feature>
<feature type="domain" description="Ig-like">
    <location>
        <begin position="20"/>
        <end position="117" status="greater than"/>
    </location>
</feature>
<feature type="region of interest" description="Framework-1" evidence="1">
    <location>
        <begin position="20"/>
        <end position="44"/>
    </location>
</feature>
<feature type="region of interest" description="Complementarity-determining-1" evidence="1">
    <location>
        <begin position="45"/>
        <end position="52"/>
    </location>
</feature>
<feature type="region of interest" description="Framework-2" evidence="1">
    <location>
        <begin position="53"/>
        <end position="69"/>
    </location>
</feature>
<feature type="region of interest" description="Complementarity-determining-2" evidence="1">
    <location>
        <begin position="70"/>
        <end position="77"/>
    </location>
</feature>
<feature type="region of interest" description="Framework-3" evidence="1">
    <location>
        <begin position="78"/>
        <end position="115"/>
    </location>
</feature>
<feature type="region of interest" description="Complementarity-determining-3" evidence="1">
    <location>
        <begin position="116"/>
        <end position="117" status="greater than"/>
    </location>
</feature>
<feature type="disulfide bond" evidence="2 3 4 20 21 22 23 24 25">
    <location>
        <begin position="41"/>
        <end position="115"/>
    </location>
</feature>
<feature type="sequence variant" id="VAR_073326" description="In IMGT allele IGHV3-23*02." evidence="8">
    <original>V</original>
    <variation>L</variation>
    <location>
        <position position="24"/>
    </location>
</feature>
<feature type="sequence variant" id="VAR_073327" description="In IMGT allele IGHV3-23*02." evidence="8">
    <original>A</original>
    <variation>G</variation>
    <location>
        <position position="80"/>
    </location>
</feature>
<feature type="sequence conflict" description="In Ref. 4; AA sequence." evidence="15" ref="4">
    <original>E</original>
    <variation>A</variation>
    <location>
        <position position="20"/>
    </location>
</feature>
<feature type="sequence conflict" description="In Ref. 3; AA sequence." evidence="15" ref="3">
    <original>G</original>
    <variation>A</variation>
    <location>
        <position position="29"/>
    </location>
</feature>
<feature type="sequence conflict" description="In Ref. 3; AA sequence." evidence="15" ref="3">
    <original>L</original>
    <variation>G</variation>
    <location>
        <position position="37"/>
    </location>
</feature>
<feature type="sequence conflict" description="In Ref. 3; AA sequence." evidence="15" ref="3">
    <original>TFSSYAMS</original>
    <variation>SFSTDAMY</variation>
    <location>
        <begin position="47"/>
        <end position="54"/>
    </location>
</feature>
<feature type="sequence conflict" description="In Ref. 3; AA sequence." evidence="15" ref="3">
    <original>SYAM</original>
    <variation>RVLS</variation>
    <location>
        <begin position="50"/>
        <end position="53"/>
    </location>
</feature>
<feature type="sequence conflict" description="In Ref. 5; AA sequence." evidence="15" ref="5">
    <original>SYA</original>
    <variation>TYV</variation>
    <location>
        <begin position="50"/>
        <end position="52"/>
    </location>
</feature>
<feature type="sequence conflict" description="In Ref. 4; AA sequence." evidence="15" ref="4">
    <original>S</original>
    <variation>A</variation>
    <location>
        <position position="50"/>
    </location>
</feature>
<feature type="sequence conflict" description="In Ref. 3; AA sequence." evidence="15" ref="3">
    <original>S</original>
    <variation>T</variation>
    <location>
        <position position="50"/>
    </location>
</feature>
<feature type="sequence conflict" description="In Ref. 3; AA sequence." evidence="15" ref="3">
    <original>YAMS</original>
    <variation>TSAVY</variation>
    <location>
        <begin position="51"/>
        <end position="54"/>
    </location>
</feature>
<feature type="sequence conflict" description="In Ref. 3; AA sequence." evidence="15" ref="3">
    <original>YAMS</original>
    <variation>TTSRF</variation>
    <location>
        <begin position="51"/>
        <end position="54"/>
    </location>
</feature>
<feature type="sequence conflict" description="In Ref. 4; AA sequence." evidence="15" ref="4">
    <original>Y</original>
    <variation>S</variation>
    <location>
        <position position="51"/>
    </location>
</feature>
<feature type="sequence conflict" description="In Ref. 3; AA sequence." evidence="15" ref="3">
    <original>SAISGSGGSTYYADSVK</original>
    <variation>AWKYQEASNSHFADTVN</variation>
    <location>
        <begin position="68"/>
        <end position="84"/>
    </location>
</feature>
<feature type="sequence conflict" description="In Ref. 3; AA sequence." evidence="15" ref="3">
    <original>SAISGSGGSTYYADSVK</original>
    <variation>GWRYEGSSLTHYAVSVQ</variation>
    <location>
        <begin position="68"/>
        <end position="84"/>
    </location>
</feature>
<feature type="sequence conflict" description="In Ref. 4; AA sequence." evidence="15" ref="4">
    <original>SAISGSGGSTY</original>
    <variation>AWKYENGNDKH</variation>
    <location>
        <begin position="68"/>
        <end position="78"/>
    </location>
</feature>
<feature type="sequence conflict" description="In Ref. 3; AA sequence." evidence="15" ref="3">
    <original>SAISGSGGSTY</original>
    <variation>EFRVQGSAISH</variation>
    <location>
        <begin position="68"/>
        <end position="78"/>
    </location>
</feature>
<feature type="sequence conflict" description="In Ref. 5; AA sequence." evidence="15" ref="5">
    <original>S</original>
    <variation>G</variation>
    <location>
        <position position="68"/>
    </location>
</feature>
<feature type="sequence conflict" description="In Ref. 3; AA sequence." evidence="15" ref="3">
    <original>AISGSGGSTYYADSVK</original>
    <variation>GRLNASSNLHFAVSAQ</variation>
    <location>
        <begin position="69"/>
        <end position="84"/>
    </location>
</feature>
<feature type="sequence conflict" description="In Ref. 5; AA sequence." evidence="15" ref="5">
    <original>SGSGGSTY</original>
    <variation>ZGLSVSZS</variation>
    <location>
        <begin position="71"/>
        <end position="78"/>
    </location>
</feature>
<feature type="sequence conflict" description="In Ref. 3; AA sequence." evidence="15" ref="3">
    <original>KG</original>
    <variation>QA</variation>
    <location>
        <begin position="84"/>
        <end position="85"/>
    </location>
</feature>
<feature type="sequence conflict" description="In Ref. 4; AA sequence." evidence="15" ref="4">
    <original>K</original>
    <variation>N</variation>
    <location>
        <position position="84"/>
    </location>
</feature>
<feature type="sequence conflict" description="In Ref. 4; AA sequence and 3; AA sequence." evidence="15" ref="4 3">
    <original>DN</original>
    <variation>ND</variation>
    <location>
        <begin position="92"/>
        <end position="93"/>
    </location>
</feature>
<feature type="sequence conflict" description="In Ref. 5; AA sequence." evidence="15" ref="5">
    <original>NSKNTLYLQ</original>
    <variation>DSKNT</variation>
    <location>
        <begin position="93"/>
        <end position="101"/>
    </location>
</feature>
<feature type="sequence conflict" description="In Ref. 4; AA sequence." evidence="15" ref="4">
    <original>Q</original>
    <variation>L</variation>
    <location>
        <position position="101"/>
    </location>
</feature>
<feature type="sequence conflict" description="In Ref. 3; AA sequence." evidence="15" ref="3">
    <original>NSLRA</original>
    <variation>LSLEP</variation>
    <location>
        <begin position="103"/>
        <end position="107"/>
    </location>
</feature>
<feature type="sequence conflict" description="In Ref. 3; AA sequence." evidence="15" ref="3">
    <original>NSLR</original>
    <variation>LSLQ</variation>
    <location>
        <begin position="103"/>
        <end position="106"/>
    </location>
</feature>
<feature type="sequence conflict" description="In Ref. 3; AA sequence." evidence="15" ref="3">
    <original>SL</original>
    <variation>TG</variation>
    <location>
        <begin position="104"/>
        <end position="105"/>
    </location>
</feature>
<feature type="sequence conflict" description="In Ref. 4; AA sequence." evidence="15" ref="4">
    <original>S</original>
    <variation>G</variation>
    <location>
        <position position="104"/>
    </location>
</feature>
<feature type="sequence conflict" description="In Ref. 3; AA sequence." evidence="15" ref="3">
    <original>S</original>
    <variation>R</variation>
    <location>
        <position position="104"/>
    </location>
</feature>
<feature type="sequence conflict" description="In Ref. 3; AA sequence." evidence="15" ref="3">
    <original>R</original>
    <variation>E</variation>
    <location>
        <position position="106"/>
    </location>
</feature>
<feature type="sequence conflict" description="In Ref. 4; AA sequence." evidence="15" ref="4">
    <original>R</original>
    <variation>Q</variation>
    <location>
        <position position="106"/>
    </location>
</feature>
<feature type="sequence conflict" description="In Ref. 4; AA sequence." evidence="15" ref="4">
    <original>DTAV</original>
    <variation>VSAI</variation>
    <location>
        <begin position="109"/>
        <end position="112"/>
    </location>
</feature>
<feature type="sequence conflict" description="In Ref. 3; AA sequence and 4; AA sequence." evidence="15" ref="3 4">
    <original>V</original>
    <variation>L</variation>
    <location>
        <position position="112"/>
    </location>
</feature>
<feature type="sequence conflict" description="In Ref. 4; AA sequence and 3; AA sequence." evidence="15" ref="4 3">
    <original>K</original>
    <variation>R</variation>
    <location>
        <position position="117"/>
    </location>
</feature>
<feature type="non-terminal residue">
    <location>
        <position position="117"/>
    </location>
</feature>
<feature type="strand" evidence="27">
    <location>
        <begin position="22"/>
        <end position="26"/>
    </location>
</feature>
<feature type="strand" evidence="27">
    <location>
        <begin position="29"/>
        <end position="31"/>
    </location>
</feature>
<feature type="strand" evidence="27">
    <location>
        <begin position="37"/>
        <end position="46"/>
    </location>
</feature>
<feature type="helix" evidence="27">
    <location>
        <begin position="48"/>
        <end position="50"/>
    </location>
</feature>
<feature type="strand" evidence="27">
    <location>
        <begin position="53"/>
        <end position="58"/>
    </location>
</feature>
<feature type="turn" evidence="26">
    <location>
        <begin position="60"/>
        <end position="62"/>
    </location>
</feature>
<feature type="strand" evidence="27">
    <location>
        <begin position="65"/>
        <end position="70"/>
    </location>
</feature>
<feature type="strand" evidence="27">
    <location>
        <begin position="74"/>
        <end position="79"/>
    </location>
</feature>
<feature type="turn" evidence="27">
    <location>
        <begin position="81"/>
        <end position="86"/>
    </location>
</feature>
<feature type="strand" evidence="27">
    <location>
        <begin position="87"/>
        <end position="92"/>
    </location>
</feature>
<feature type="turn" evidence="27">
    <location>
        <begin position="93"/>
        <end position="96"/>
    </location>
</feature>
<feature type="strand" evidence="27">
    <location>
        <begin position="97"/>
        <end position="102"/>
    </location>
</feature>
<feature type="helix" evidence="27">
    <location>
        <begin position="107"/>
        <end position="109"/>
    </location>
</feature>
<feature type="strand" evidence="27">
    <location>
        <begin position="111"/>
        <end position="117"/>
    </location>
</feature>
<reference key="1">
    <citation type="journal article" date="1980" name="Proc. Natl. Acad. Sci. U.S.A.">
        <title>Structure and multiplicity of genes for the human immunoglobulin heavy chain variable region.</title>
        <authorList>
            <person name="Matthyssens G."/>
            <person name="Rabbitts T.H."/>
        </authorList>
    </citation>
    <scope>NUCLEOTIDE SEQUENCE [GENOMIC DNA] (IMGT ALLELE IGHV3-23*02)</scope>
    <scope>VARIANTS LEU-24 AND GLY-80</scope>
</reference>
<reference key="2">
    <citation type="journal article" date="2003" name="Nature">
        <title>The DNA sequence and analysis of human chromosome 14.</title>
        <authorList>
            <person name="Heilig R."/>
            <person name="Eckenberg R."/>
            <person name="Petit J.-L."/>
            <person name="Fonknechten N."/>
            <person name="Da Silva C."/>
            <person name="Cattolico L."/>
            <person name="Levy M."/>
            <person name="Barbe V."/>
            <person name="De Berardinis V."/>
            <person name="Ureta-Vidal A."/>
            <person name="Pelletier E."/>
            <person name="Vico V."/>
            <person name="Anthouard V."/>
            <person name="Rowen L."/>
            <person name="Madan A."/>
            <person name="Qin S."/>
            <person name="Sun H."/>
            <person name="Du H."/>
            <person name="Pepin K."/>
            <person name="Artiguenave F."/>
            <person name="Robert C."/>
            <person name="Cruaud C."/>
            <person name="Bruels T."/>
            <person name="Jaillon O."/>
            <person name="Friedlander L."/>
            <person name="Samson G."/>
            <person name="Brottier P."/>
            <person name="Cure S."/>
            <person name="Segurens B."/>
            <person name="Aniere F."/>
            <person name="Samain S."/>
            <person name="Crespeau H."/>
            <person name="Abbasi N."/>
            <person name="Aiach N."/>
            <person name="Boscus D."/>
            <person name="Dickhoff R."/>
            <person name="Dors M."/>
            <person name="Dubois I."/>
            <person name="Friedman C."/>
            <person name="Gouyvenoux M."/>
            <person name="James R."/>
            <person name="Madan A."/>
            <person name="Mairey-Estrada B."/>
            <person name="Mangenot S."/>
            <person name="Martins N."/>
            <person name="Menard M."/>
            <person name="Oztas S."/>
            <person name="Ratcliffe A."/>
            <person name="Shaffer T."/>
            <person name="Trask B."/>
            <person name="Vacherie B."/>
            <person name="Bellemere C."/>
            <person name="Belser C."/>
            <person name="Besnard-Gonnet M."/>
            <person name="Bartol-Mavel D."/>
            <person name="Boutard M."/>
            <person name="Briez-Silla S."/>
            <person name="Combette S."/>
            <person name="Dufosse-Laurent V."/>
            <person name="Ferron C."/>
            <person name="Lechaplais C."/>
            <person name="Louesse C."/>
            <person name="Muselet D."/>
            <person name="Magdelenat G."/>
            <person name="Pateau E."/>
            <person name="Petit E."/>
            <person name="Sirvain-Trukniewicz P."/>
            <person name="Trybou A."/>
            <person name="Vega-Czarny N."/>
            <person name="Bataille E."/>
            <person name="Bluet E."/>
            <person name="Bordelais I."/>
            <person name="Dubois M."/>
            <person name="Dumont C."/>
            <person name="Guerin T."/>
            <person name="Haffray S."/>
            <person name="Hammadi R."/>
            <person name="Muanga J."/>
            <person name="Pellouin V."/>
            <person name="Robert D."/>
            <person name="Wunderle E."/>
            <person name="Gauguet G."/>
            <person name="Roy A."/>
            <person name="Sainte-Marthe L."/>
            <person name="Verdier J."/>
            <person name="Verdier-Discala C."/>
            <person name="Hillier L.W."/>
            <person name="Fulton L."/>
            <person name="McPherson J."/>
            <person name="Matsuda F."/>
            <person name="Wilson R."/>
            <person name="Scarpelli C."/>
            <person name="Gyapay G."/>
            <person name="Wincker P."/>
            <person name="Saurin W."/>
            <person name="Quetier F."/>
            <person name="Waterston R."/>
            <person name="Hood L."/>
            <person name="Weissenbach J."/>
        </authorList>
    </citation>
    <scope>NUCLEOTIDE SEQUENCE [LARGE SCALE GENOMIC DNA] (IMGT ALLELE IGHV3-23*04)</scope>
</reference>
<reference key="3">
    <citation type="journal article" date="1974" name="Proc. Natl. Acad. Sci. U.S.A.">
        <title>Variable region sequences of five human immunoglobulin heavy chains of the VH3 subgroup: definitive identification of four heavy chain hypervariable regions.</title>
        <authorList>
            <person name="Capra J.D."/>
            <person name="Kehoe J.M."/>
        </authorList>
    </citation>
    <scope>PROTEIN SEQUENCE OF 20-117</scope>
    <scope>VARIANT LEU-24</scope>
</reference>
<reference key="4">
    <citation type="journal article" date="1974" name="Proc. Natl. Acad. Sci. U.S.A.">
        <title>Structure of antibodies with shared idiotypy: the complete sequence of the heavy chain variable regions of two immunoglobulin M anti-gamma globulins.</title>
        <authorList>
            <person name="Capra J.D."/>
            <person name="Kehoe J.M."/>
        </authorList>
    </citation>
    <scope>PROTEIN SEQUENCE OF 20-117</scope>
    <scope>VARIANT LEU-24</scope>
</reference>
<reference key="5">
    <citation type="journal article" date="1977" name="J. Biol. Chem.">
        <title>Immunoglobulin structure and genetics. Identity between variable regions of a mu and a gamma2 chain.</title>
        <authorList>
            <person name="Wang A.-C."/>
            <person name="Wang I.Y."/>
            <person name="Fudenberg H.H."/>
        </authorList>
    </citation>
    <scope>PROTEIN SEQUENCE OF 20-117</scope>
    <scope>VARIANT LEU-24</scope>
</reference>
<reference key="6">
    <citation type="journal article" date="1993" name="Eur. J. Immunol.">
        <title>Nucleotidic sequence analysis of the variable domains of four human monoclonal IgM with an antibody activity to myelin-associated glycoprotein.</title>
        <authorList>
            <person name="Mariette X."/>
            <person name="Tsapis A."/>
            <person name="Brouet J.C."/>
        </authorList>
    </citation>
    <scope>NUCLEOTIDE SEQUENCE [GENOMIC DNA] OF 20-117</scope>
</reference>
<reference key="7">
    <citation type="journal article" date="2001" name="Exp. Clin. Immunogenet.">
        <title>Nomenclature of the human immunoglobulin heavy (IGH) genes.</title>
        <authorList>
            <person name="Lefranc M.P."/>
        </authorList>
    </citation>
    <scope>NOMENCLATURE</scope>
</reference>
<reference key="8">
    <citation type="book" date="2001" name="The Immunoglobulin FactsBook.">
        <title>The Immunoglobulin FactsBook.</title>
        <editorList>
            <person name="Lefranc M.P."/>
            <person name="Lefranc G."/>
        </editorList>
        <authorList>
            <person name="Lefranc M.P."/>
            <person name="Lefranc G."/>
        </authorList>
    </citation>
    <scope>NOMENCLATURE</scope>
</reference>
<reference key="9">
    <citation type="journal article" date="2007" name="Annu. Rev. Genet.">
        <title>Immunoglobulin somatic hypermutation.</title>
        <authorList>
            <person name="Teng G."/>
            <person name="Papavasiliou F.N."/>
        </authorList>
    </citation>
    <scope>REVIEW ON SOMATIC HYPERMUTATION</scope>
</reference>
<reference key="10">
    <citation type="journal article" date="2010" name="J. Allergy Clin. Immunol.">
        <title>Structure and function of immunoglobulins.</title>
        <authorList>
            <person name="Schroeder H.W. Jr."/>
            <person name="Cavacini L."/>
        </authorList>
    </citation>
    <scope>REVIEW ON IMMUNOGLOBULINS</scope>
</reference>
<reference key="11">
    <citation type="journal article" date="2012" name="Nat. Rev. Immunol.">
        <title>Molecular programming of B cell memory.</title>
        <authorList>
            <person name="McHeyzer-Williams M."/>
            <person name="Okitsu S."/>
            <person name="Wang N."/>
            <person name="McHeyzer-Williams L."/>
        </authorList>
    </citation>
    <scope>REVIEW ON FUNCTION</scope>
</reference>
<reference key="12">
    <citation type="journal article" date="2014" name="Front. Immunol.">
        <title>Immunoglobulin and T Cell Receptor Genes: IMGT((R)) and the Birth and Rise of Immunoinformatics.</title>
        <authorList>
            <person name="Lefranc M.P."/>
        </authorList>
    </citation>
    <scope>NOMENCLATURE</scope>
</reference>
<reference key="13">
    <citation type="journal article" date="1985" name="Proc. Natl. Acad. Sci. U.S.A.">
        <title>Organization and sequences of the diversity, joining, and constant region genes of the human T-cell receptor beta chain.</title>
        <authorList>
            <person name="Toyonaga B."/>
            <person name="Yoshikai Y."/>
            <person name="Vadasz V."/>
            <person name="Chin B."/>
            <person name="Mak T.W."/>
        </authorList>
    </citation>
    <scope>3D-STRUCTURE MODELING OF 20-117</scope>
</reference>
<reference key="14">
    <citation type="journal article" date="2004" name="J. Mol. Biol.">
        <title>Crystal structure of HEL4, a soluble, refoldable human V(H) single domain with a germ-line scaffold.</title>
        <authorList>
            <person name="Jespers L."/>
            <person name="Schon O."/>
            <person name="James L.C."/>
            <person name="Veprintsev D."/>
            <person name="Winter G."/>
        </authorList>
    </citation>
    <scope>X-RAY CRYSTALLOGRAPHY (2.00 ANGSTROMS) OF 20-116</scope>
    <scope>DISULFIDE BONDS</scope>
</reference>
<reference key="15">
    <citation type="journal article" date="2014" name="PLoS ONE">
        <title>Directed evolution of human heavy chain variable domain (VH) using in vivo protein fitness filter.</title>
        <authorList>
            <person name="Kim D.S."/>
            <person name="Song H.N."/>
            <person name="Nam H.J."/>
            <person name="Kim S.G."/>
            <person name="Park Y.S."/>
            <person name="Park J.C."/>
            <person name="Woo E.J."/>
            <person name="Lim H.K."/>
        </authorList>
    </citation>
    <scope>X-RAY CRYSTALLOGRAPHY (1.96 ANGSTROMS) OF 20-116</scope>
    <scope>DISULFIDE BONDS</scope>
</reference>
<accession>P01764</accession>
<accession>A0A087WSX3</accession>
<accession>P01765</accession>
<accession>P01774</accession>
<accession>P01775</accession>
<accession>P01776</accession>
<accession>P01777</accession>
<accession>P01778</accession>
<accession>P01779</accession>
<keyword id="KW-0002">3D-structure</keyword>
<keyword id="KW-1064">Adaptive immunity</keyword>
<keyword id="KW-1003">Cell membrane</keyword>
<keyword id="KW-0903">Direct protein sequencing</keyword>
<keyword id="KW-1015">Disulfide bond</keyword>
<keyword id="KW-0391">Immunity</keyword>
<keyword id="KW-1280">Immunoglobulin</keyword>
<keyword id="KW-0393">Immunoglobulin domain</keyword>
<keyword id="KW-0472">Membrane</keyword>
<keyword id="KW-1267">Proteomics identification</keyword>
<keyword id="KW-1185">Reference proteome</keyword>
<keyword id="KW-0964">Secreted</keyword>
<keyword id="KW-0732">Signal</keyword>
<comment type="function">
    <text evidence="10 11 12 13">V region of the variable domain of immunoglobulin heavy chains that participates in the antigen recognition (PubMed:24600447). Immunoglobulins, also known as antibodies, are membrane-bound or secreted glycoproteins produced by B lymphocytes. In the recognition phase of humoral immunity, the membrane-bound immunoglobulins serve as receptors which, upon binding of a specific antigen, trigger the clonal expansion and differentiation of B lymphocytes into immunoglobulins-secreting plasma cells. Secreted immunoglobulins mediate the effector phase of humoral immunity, which results in the elimination of bound antigens (PubMed:20176268, PubMed:22158414). The antigen binding site is formed by the variable domain of one heavy chain, together with that of its associated light chain. Thus, each immunoglobulin has two antigen binding sites with remarkable affinity for a particular antigen. The variable domains are assembled by a process called V-(D)-J rearrangement and can then be subjected to somatic hypermutations which, after exposure to antigen and selection, allow affinity maturation for a particular antigen (PubMed:17576170, PubMed:20176268).</text>
</comment>
<comment type="subunit">
    <text evidence="11">Immunoglobulins are composed of two identical heavy chains and two identical light chains; disulfide-linked.</text>
</comment>
<comment type="subcellular location">
    <subcellularLocation>
        <location evidence="11 12">Secreted</location>
    </subcellularLocation>
    <subcellularLocation>
        <location evidence="11 12">Cell membrane</location>
    </subcellularLocation>
</comment>
<comment type="polymorphism">
    <text evidence="15">There are several alleles. The sequence shown is that of IMGT allele IGHV3-23*04.</text>
</comment>
<comment type="caution">
    <text evidence="15">For examples of full-length immunoglobulin heavy chains (of different isotypes) see AC P0DOX2, AC P0DOX3, AC P0DOX4, AC P0DOX5 and AC P0DOX6.</text>
</comment>
<name>HV323_HUMAN</name>
<gene>
    <name evidence="9 14" type="primary">IGHV3-23</name>
</gene>
<proteinExistence type="evidence at protein level"/>